<feature type="chain" id="PRO_0000152802" description="Phosphomethylpyrimidine synthase">
    <location>
        <begin position="1"/>
        <end position="554"/>
    </location>
</feature>
<feature type="binding site" evidence="1">
    <location>
        <position position="188"/>
    </location>
    <ligand>
        <name>substrate</name>
    </ligand>
</feature>
<feature type="binding site" evidence="1">
    <location>
        <position position="217"/>
    </location>
    <ligand>
        <name>substrate</name>
    </ligand>
</feature>
<feature type="binding site" evidence="1">
    <location>
        <position position="246"/>
    </location>
    <ligand>
        <name>substrate</name>
    </ligand>
</feature>
<feature type="binding site" evidence="1">
    <location>
        <position position="282"/>
    </location>
    <ligand>
        <name>substrate</name>
    </ligand>
</feature>
<feature type="binding site" evidence="1">
    <location>
        <begin position="302"/>
        <end position="304"/>
    </location>
    <ligand>
        <name>substrate</name>
    </ligand>
</feature>
<feature type="binding site" evidence="1">
    <location>
        <begin position="343"/>
        <end position="346"/>
    </location>
    <ligand>
        <name>substrate</name>
    </ligand>
</feature>
<feature type="binding site" evidence="1">
    <location>
        <position position="382"/>
    </location>
    <ligand>
        <name>substrate</name>
    </ligand>
</feature>
<feature type="binding site" evidence="1">
    <location>
        <position position="386"/>
    </location>
    <ligand>
        <name>Zn(2+)</name>
        <dbReference type="ChEBI" id="CHEBI:29105"/>
    </ligand>
</feature>
<feature type="binding site" evidence="1">
    <location>
        <position position="409"/>
    </location>
    <ligand>
        <name>substrate</name>
    </ligand>
</feature>
<feature type="binding site" evidence="1">
    <location>
        <position position="450"/>
    </location>
    <ligand>
        <name>Zn(2+)</name>
        <dbReference type="ChEBI" id="CHEBI:29105"/>
    </ligand>
</feature>
<feature type="binding site" evidence="1">
    <location>
        <position position="530"/>
    </location>
    <ligand>
        <name>[4Fe-4S] cluster</name>
        <dbReference type="ChEBI" id="CHEBI:49883"/>
        <note>4Fe-4S-S-AdoMet</note>
    </ligand>
</feature>
<feature type="binding site" evidence="1">
    <location>
        <position position="533"/>
    </location>
    <ligand>
        <name>[4Fe-4S] cluster</name>
        <dbReference type="ChEBI" id="CHEBI:49883"/>
        <note>4Fe-4S-S-AdoMet</note>
    </ligand>
</feature>
<feature type="binding site" evidence="1">
    <location>
        <position position="538"/>
    </location>
    <ligand>
        <name>[4Fe-4S] cluster</name>
        <dbReference type="ChEBI" id="CHEBI:49883"/>
        <note>4Fe-4S-S-AdoMet</note>
    </ligand>
</feature>
<protein>
    <recommendedName>
        <fullName evidence="1">Phosphomethylpyrimidine synthase</fullName>
        <ecNumber evidence="1">4.1.99.17</ecNumber>
    </recommendedName>
    <alternativeName>
        <fullName evidence="1">Hydroxymethylpyrimidine phosphate synthase</fullName>
        <shortName evidence="1">HMP-P synthase</shortName>
        <shortName evidence="1">HMP-phosphate synthase</shortName>
        <shortName evidence="1">HMPP synthase</shortName>
    </alternativeName>
    <alternativeName>
        <fullName evidence="1">Thiamine biosynthesis protein ThiC</fullName>
    </alternativeName>
</protein>
<organism>
    <name type="scientific">Coxiella burnetii (strain RSA 493 / Nine Mile phase I)</name>
    <dbReference type="NCBI Taxonomy" id="227377"/>
    <lineage>
        <taxon>Bacteria</taxon>
        <taxon>Pseudomonadati</taxon>
        <taxon>Pseudomonadota</taxon>
        <taxon>Gammaproteobacteria</taxon>
        <taxon>Legionellales</taxon>
        <taxon>Coxiellaceae</taxon>
        <taxon>Coxiella</taxon>
    </lineage>
</organism>
<keyword id="KW-0004">4Fe-4S</keyword>
<keyword id="KW-0408">Iron</keyword>
<keyword id="KW-0411">Iron-sulfur</keyword>
<keyword id="KW-0456">Lyase</keyword>
<keyword id="KW-0479">Metal-binding</keyword>
<keyword id="KW-1185">Reference proteome</keyword>
<keyword id="KW-0949">S-adenosyl-L-methionine</keyword>
<keyword id="KW-0784">Thiamine biosynthesis</keyword>
<keyword id="KW-0862">Zinc</keyword>
<name>THIC_COXBU</name>
<proteinExistence type="inferred from homology"/>
<gene>
    <name evidence="1" type="primary">thiC</name>
    <name type="ordered locus">CBU_0330</name>
</gene>
<sequence length="554" mass="62594">MRREGTMRLHRTFLLRVYLKESAVITYPASKKIYCQGKIFPTIRVGMREIQLTNGDSLTLYDTSGPYSDPNISIKSPQGLPRLREPWIKVRPRKTQLAFAKEGVITPEMEYAAIRENQKRELKKNTDQERERRLQGNSLSARIPNPITPEFIRNEIACGRAILPANINHPESEPMIIGRHFLVKVNANIGNSSLTSSVEEEVEKLIWALRWGADTVMDLSTGKKIKEIRETILRHSPVPIGTVPLYEALEKVDGDVKALTWEIFRDTLISQAEQGVDYFTIHAGVLNRFIPLTQKRVTGIVSRGGSLMAKWCLLHREENFLYTHFTEICEIMRAYDVSFSLGDGLRPGSIADANDEAQFAELKIQGELNRIAWKYGVQVMNEGPGHIPLNLIEENMTKQLAYCREAPFYTLGPLTTDIAPGYDHIGSAIGAAFIAWQGCALLCYVTPKEHLGLPNKQDVKEGLIAYKIAAHAADLAKGHPAARQRDYLLSQARFEFRWHDQFNLALDAETARLFHDETLPKEAAKHAHFCSLCGPKFCAYKTSHEVRDTLQKVT</sequence>
<evidence type="ECO:0000255" key="1">
    <source>
        <dbReference type="HAMAP-Rule" id="MF_00089"/>
    </source>
</evidence>
<dbReference type="EC" id="4.1.99.17" evidence="1"/>
<dbReference type="EMBL" id="AE016828">
    <property type="protein sequence ID" value="AAO89886.2"/>
    <property type="molecule type" value="Genomic_DNA"/>
</dbReference>
<dbReference type="RefSeq" id="NP_819372.2">
    <property type="nucleotide sequence ID" value="NC_002971.3"/>
</dbReference>
<dbReference type="SMR" id="Q83EJ0"/>
<dbReference type="STRING" id="227377.CBU_0330"/>
<dbReference type="EnsemblBacteria" id="AAO89886">
    <property type="protein sequence ID" value="AAO89886"/>
    <property type="gene ID" value="CBU_0330"/>
</dbReference>
<dbReference type="GeneID" id="1208212"/>
<dbReference type="KEGG" id="cbu:CBU_0330"/>
<dbReference type="PATRIC" id="fig|227377.7.peg.324"/>
<dbReference type="eggNOG" id="COG0422">
    <property type="taxonomic scope" value="Bacteria"/>
</dbReference>
<dbReference type="HOGENOM" id="CLU_013181_2_1_6"/>
<dbReference type="OrthoDB" id="9805897at2"/>
<dbReference type="UniPathway" id="UPA00060"/>
<dbReference type="Proteomes" id="UP000002671">
    <property type="component" value="Chromosome"/>
</dbReference>
<dbReference type="GO" id="GO:0005829">
    <property type="term" value="C:cytosol"/>
    <property type="evidence" value="ECO:0000318"/>
    <property type="project" value="GO_Central"/>
</dbReference>
<dbReference type="GO" id="GO:0051539">
    <property type="term" value="F:4 iron, 4 sulfur cluster binding"/>
    <property type="evidence" value="ECO:0007669"/>
    <property type="project" value="UniProtKB-KW"/>
</dbReference>
<dbReference type="GO" id="GO:0016830">
    <property type="term" value="F:carbon-carbon lyase activity"/>
    <property type="evidence" value="ECO:0007669"/>
    <property type="project" value="InterPro"/>
</dbReference>
<dbReference type="GO" id="GO:0008270">
    <property type="term" value="F:zinc ion binding"/>
    <property type="evidence" value="ECO:0007669"/>
    <property type="project" value="UniProtKB-UniRule"/>
</dbReference>
<dbReference type="GO" id="GO:0009228">
    <property type="term" value="P:thiamine biosynthetic process"/>
    <property type="evidence" value="ECO:0000318"/>
    <property type="project" value="GO_Central"/>
</dbReference>
<dbReference type="GO" id="GO:0009229">
    <property type="term" value="P:thiamine diphosphate biosynthetic process"/>
    <property type="evidence" value="ECO:0007669"/>
    <property type="project" value="UniProtKB-UniRule"/>
</dbReference>
<dbReference type="FunFam" id="3.20.20.540:FF:000001">
    <property type="entry name" value="Phosphomethylpyrimidine synthase"/>
    <property type="match status" value="1"/>
</dbReference>
<dbReference type="Gene3D" id="6.10.250.620">
    <property type="match status" value="1"/>
</dbReference>
<dbReference type="Gene3D" id="3.20.20.540">
    <property type="entry name" value="Radical SAM ThiC family, central domain"/>
    <property type="match status" value="1"/>
</dbReference>
<dbReference type="HAMAP" id="MF_00089">
    <property type="entry name" value="ThiC"/>
    <property type="match status" value="1"/>
</dbReference>
<dbReference type="InterPro" id="IPR037509">
    <property type="entry name" value="ThiC"/>
</dbReference>
<dbReference type="InterPro" id="IPR025747">
    <property type="entry name" value="ThiC-associated_dom"/>
</dbReference>
<dbReference type="InterPro" id="IPR038521">
    <property type="entry name" value="ThiC/Bza_core_dom"/>
</dbReference>
<dbReference type="InterPro" id="IPR002817">
    <property type="entry name" value="ThiC/BzaA/B"/>
</dbReference>
<dbReference type="NCBIfam" id="NF006763">
    <property type="entry name" value="PRK09284.1"/>
    <property type="match status" value="1"/>
</dbReference>
<dbReference type="NCBIfam" id="NF009895">
    <property type="entry name" value="PRK13352.1"/>
    <property type="match status" value="1"/>
</dbReference>
<dbReference type="NCBIfam" id="TIGR00190">
    <property type="entry name" value="thiC"/>
    <property type="match status" value="1"/>
</dbReference>
<dbReference type="PANTHER" id="PTHR30557:SF1">
    <property type="entry name" value="PHOSPHOMETHYLPYRIMIDINE SYNTHASE, CHLOROPLASTIC"/>
    <property type="match status" value="1"/>
</dbReference>
<dbReference type="PANTHER" id="PTHR30557">
    <property type="entry name" value="THIAMINE BIOSYNTHESIS PROTEIN THIC"/>
    <property type="match status" value="1"/>
</dbReference>
<dbReference type="Pfam" id="PF13667">
    <property type="entry name" value="ThiC-associated"/>
    <property type="match status" value="1"/>
</dbReference>
<dbReference type="Pfam" id="PF01964">
    <property type="entry name" value="ThiC_Rad_SAM"/>
    <property type="match status" value="1"/>
</dbReference>
<dbReference type="SFLD" id="SFLDF00407">
    <property type="entry name" value="phosphomethylpyrimidine_syntha"/>
    <property type="match status" value="1"/>
</dbReference>
<dbReference type="SFLD" id="SFLDG01114">
    <property type="entry name" value="phosphomethylpyrimidine_syntha"/>
    <property type="match status" value="1"/>
</dbReference>
<dbReference type="SFLD" id="SFLDS00113">
    <property type="entry name" value="Radical_SAM_Phosphomethylpyrim"/>
    <property type="match status" value="1"/>
</dbReference>
<reference key="1">
    <citation type="journal article" date="2003" name="Proc. Natl. Acad. Sci. U.S.A.">
        <title>Complete genome sequence of the Q-fever pathogen, Coxiella burnetii.</title>
        <authorList>
            <person name="Seshadri R."/>
            <person name="Paulsen I.T."/>
            <person name="Eisen J.A."/>
            <person name="Read T.D."/>
            <person name="Nelson K.E."/>
            <person name="Nelson W.C."/>
            <person name="Ward N.L."/>
            <person name="Tettelin H."/>
            <person name="Davidsen T.M."/>
            <person name="Beanan M.J."/>
            <person name="DeBoy R.T."/>
            <person name="Daugherty S.C."/>
            <person name="Brinkac L.M."/>
            <person name="Madupu R."/>
            <person name="Dodson R.J."/>
            <person name="Khouri H.M."/>
            <person name="Lee K.H."/>
            <person name="Carty H.A."/>
            <person name="Scanlan D."/>
            <person name="Heinzen R.A."/>
            <person name="Thompson H.A."/>
            <person name="Samuel J.E."/>
            <person name="Fraser C.M."/>
            <person name="Heidelberg J.F."/>
        </authorList>
    </citation>
    <scope>NUCLEOTIDE SEQUENCE [LARGE SCALE GENOMIC DNA]</scope>
    <source>
        <strain>RSA 493 / Nine Mile phase I</strain>
    </source>
</reference>
<comment type="function">
    <text evidence="1">Catalyzes the synthesis of the hydroxymethylpyrimidine phosphate (HMP-P) moiety of thiamine from aminoimidazole ribotide (AIR) in a radical S-adenosyl-L-methionine (SAM)-dependent reaction.</text>
</comment>
<comment type="catalytic activity">
    <reaction evidence="1">
        <text>5-amino-1-(5-phospho-beta-D-ribosyl)imidazole + S-adenosyl-L-methionine = 4-amino-2-methyl-5-(phosphooxymethyl)pyrimidine + CO + 5'-deoxyadenosine + formate + L-methionine + 3 H(+)</text>
        <dbReference type="Rhea" id="RHEA:24840"/>
        <dbReference type="ChEBI" id="CHEBI:15378"/>
        <dbReference type="ChEBI" id="CHEBI:15740"/>
        <dbReference type="ChEBI" id="CHEBI:17245"/>
        <dbReference type="ChEBI" id="CHEBI:17319"/>
        <dbReference type="ChEBI" id="CHEBI:57844"/>
        <dbReference type="ChEBI" id="CHEBI:58354"/>
        <dbReference type="ChEBI" id="CHEBI:59789"/>
        <dbReference type="ChEBI" id="CHEBI:137981"/>
        <dbReference type="EC" id="4.1.99.17"/>
    </reaction>
</comment>
<comment type="cofactor">
    <cofactor evidence="1">
        <name>[4Fe-4S] cluster</name>
        <dbReference type="ChEBI" id="CHEBI:49883"/>
    </cofactor>
    <text evidence="1">Binds 1 [4Fe-4S] cluster per subunit. The cluster is coordinated with 3 cysteines and an exchangeable S-adenosyl-L-methionine.</text>
</comment>
<comment type="pathway">
    <text evidence="1">Cofactor biosynthesis; thiamine diphosphate biosynthesis.</text>
</comment>
<comment type="subunit">
    <text evidence="1">Homodimer.</text>
</comment>
<comment type="similarity">
    <text evidence="1">Belongs to the ThiC family.</text>
</comment>
<accession>Q83EJ0</accession>